<feature type="chain" id="PRO_1000077905" description="UvrABC system protein B">
    <location>
        <begin position="1"/>
        <end position="649"/>
    </location>
</feature>
<feature type="domain" description="Helicase ATP-binding" evidence="1">
    <location>
        <begin position="25"/>
        <end position="178"/>
    </location>
</feature>
<feature type="domain" description="Helicase C-terminal" evidence="1">
    <location>
        <begin position="428"/>
        <end position="594"/>
    </location>
</feature>
<feature type="domain" description="UVR" evidence="1">
    <location>
        <begin position="614"/>
        <end position="649"/>
    </location>
</feature>
<feature type="short sequence motif" description="Beta-hairpin">
    <location>
        <begin position="91"/>
        <end position="114"/>
    </location>
</feature>
<feature type="binding site" evidence="1">
    <location>
        <begin position="38"/>
        <end position="45"/>
    </location>
    <ligand>
        <name>ATP</name>
        <dbReference type="ChEBI" id="CHEBI:30616"/>
    </ligand>
</feature>
<organism>
    <name type="scientific">Methanosphaera stadtmanae (strain ATCC 43021 / DSM 3091 / JCM 11832 / MCB-3)</name>
    <dbReference type="NCBI Taxonomy" id="339860"/>
    <lineage>
        <taxon>Archaea</taxon>
        <taxon>Methanobacteriati</taxon>
        <taxon>Methanobacteriota</taxon>
        <taxon>Methanomada group</taxon>
        <taxon>Methanobacteria</taxon>
        <taxon>Methanobacteriales</taxon>
        <taxon>Methanobacteriaceae</taxon>
        <taxon>Methanosphaera</taxon>
    </lineage>
</organism>
<keyword id="KW-0067">ATP-binding</keyword>
<keyword id="KW-0963">Cytoplasm</keyword>
<keyword id="KW-0227">DNA damage</keyword>
<keyword id="KW-0228">DNA excision</keyword>
<keyword id="KW-0234">DNA repair</keyword>
<keyword id="KW-0267">Excision nuclease</keyword>
<keyword id="KW-0347">Helicase</keyword>
<keyword id="KW-0378">Hydrolase</keyword>
<keyword id="KW-0547">Nucleotide-binding</keyword>
<keyword id="KW-1185">Reference proteome</keyword>
<keyword id="KW-0742">SOS response</keyword>
<name>UVRB_METST</name>
<dbReference type="EMBL" id="CP000102">
    <property type="protein sequence ID" value="ABC56972.1"/>
    <property type="molecule type" value="Genomic_DNA"/>
</dbReference>
<dbReference type="RefSeq" id="WP_011406172.1">
    <property type="nucleotide sequence ID" value="NC_007681.1"/>
</dbReference>
<dbReference type="SMR" id="Q2NGT1"/>
<dbReference type="STRING" id="339860.Msp_0573"/>
<dbReference type="GeneID" id="41325147"/>
<dbReference type="KEGG" id="mst:Msp_0573"/>
<dbReference type="eggNOG" id="arCOG04748">
    <property type="taxonomic scope" value="Archaea"/>
</dbReference>
<dbReference type="HOGENOM" id="CLU_009621_2_1_2"/>
<dbReference type="OrthoDB" id="8371at2157"/>
<dbReference type="Proteomes" id="UP000001931">
    <property type="component" value="Chromosome"/>
</dbReference>
<dbReference type="GO" id="GO:0005737">
    <property type="term" value="C:cytoplasm"/>
    <property type="evidence" value="ECO:0007669"/>
    <property type="project" value="UniProtKB-SubCell"/>
</dbReference>
<dbReference type="GO" id="GO:0009380">
    <property type="term" value="C:excinuclease repair complex"/>
    <property type="evidence" value="ECO:0007669"/>
    <property type="project" value="InterPro"/>
</dbReference>
<dbReference type="GO" id="GO:0005524">
    <property type="term" value="F:ATP binding"/>
    <property type="evidence" value="ECO:0007669"/>
    <property type="project" value="UniProtKB-UniRule"/>
</dbReference>
<dbReference type="GO" id="GO:0016887">
    <property type="term" value="F:ATP hydrolysis activity"/>
    <property type="evidence" value="ECO:0007669"/>
    <property type="project" value="InterPro"/>
</dbReference>
<dbReference type="GO" id="GO:0003677">
    <property type="term" value="F:DNA binding"/>
    <property type="evidence" value="ECO:0007669"/>
    <property type="project" value="UniProtKB-UniRule"/>
</dbReference>
<dbReference type="GO" id="GO:0009381">
    <property type="term" value="F:excinuclease ABC activity"/>
    <property type="evidence" value="ECO:0007669"/>
    <property type="project" value="UniProtKB-UniRule"/>
</dbReference>
<dbReference type="GO" id="GO:0004386">
    <property type="term" value="F:helicase activity"/>
    <property type="evidence" value="ECO:0007669"/>
    <property type="project" value="UniProtKB-KW"/>
</dbReference>
<dbReference type="GO" id="GO:0006289">
    <property type="term" value="P:nucleotide-excision repair"/>
    <property type="evidence" value="ECO:0007669"/>
    <property type="project" value="UniProtKB-UniRule"/>
</dbReference>
<dbReference type="GO" id="GO:0009432">
    <property type="term" value="P:SOS response"/>
    <property type="evidence" value="ECO:0007669"/>
    <property type="project" value="UniProtKB-UniRule"/>
</dbReference>
<dbReference type="CDD" id="cd17916">
    <property type="entry name" value="DEXHc_UvrB"/>
    <property type="match status" value="1"/>
</dbReference>
<dbReference type="CDD" id="cd18790">
    <property type="entry name" value="SF2_C_UvrB"/>
    <property type="match status" value="1"/>
</dbReference>
<dbReference type="Gene3D" id="6.10.140.240">
    <property type="match status" value="1"/>
</dbReference>
<dbReference type="Gene3D" id="3.40.50.300">
    <property type="entry name" value="P-loop containing nucleotide triphosphate hydrolases"/>
    <property type="match status" value="3"/>
</dbReference>
<dbReference type="Gene3D" id="4.10.860.10">
    <property type="entry name" value="UVR domain"/>
    <property type="match status" value="1"/>
</dbReference>
<dbReference type="HAMAP" id="MF_00204">
    <property type="entry name" value="UvrB"/>
    <property type="match status" value="1"/>
</dbReference>
<dbReference type="InterPro" id="IPR006935">
    <property type="entry name" value="Helicase/UvrB_N"/>
</dbReference>
<dbReference type="InterPro" id="IPR014001">
    <property type="entry name" value="Helicase_ATP-bd"/>
</dbReference>
<dbReference type="InterPro" id="IPR001650">
    <property type="entry name" value="Helicase_C-like"/>
</dbReference>
<dbReference type="InterPro" id="IPR027417">
    <property type="entry name" value="P-loop_NTPase"/>
</dbReference>
<dbReference type="InterPro" id="IPR001943">
    <property type="entry name" value="UVR_dom"/>
</dbReference>
<dbReference type="InterPro" id="IPR036876">
    <property type="entry name" value="UVR_dom_sf"/>
</dbReference>
<dbReference type="InterPro" id="IPR004807">
    <property type="entry name" value="UvrB"/>
</dbReference>
<dbReference type="InterPro" id="IPR041471">
    <property type="entry name" value="UvrB_inter"/>
</dbReference>
<dbReference type="InterPro" id="IPR024759">
    <property type="entry name" value="UvrB_YAD/RRR_dom"/>
</dbReference>
<dbReference type="NCBIfam" id="NF003673">
    <property type="entry name" value="PRK05298.1"/>
    <property type="match status" value="1"/>
</dbReference>
<dbReference type="NCBIfam" id="TIGR00631">
    <property type="entry name" value="uvrb"/>
    <property type="match status" value="1"/>
</dbReference>
<dbReference type="PANTHER" id="PTHR24029">
    <property type="entry name" value="UVRABC SYSTEM PROTEIN B"/>
    <property type="match status" value="1"/>
</dbReference>
<dbReference type="PANTHER" id="PTHR24029:SF0">
    <property type="entry name" value="UVRABC SYSTEM PROTEIN B"/>
    <property type="match status" value="1"/>
</dbReference>
<dbReference type="Pfam" id="PF00271">
    <property type="entry name" value="Helicase_C"/>
    <property type="match status" value="1"/>
</dbReference>
<dbReference type="Pfam" id="PF04851">
    <property type="entry name" value="ResIII"/>
    <property type="match status" value="1"/>
</dbReference>
<dbReference type="Pfam" id="PF02151">
    <property type="entry name" value="UVR"/>
    <property type="match status" value="1"/>
</dbReference>
<dbReference type="Pfam" id="PF12344">
    <property type="entry name" value="UvrB"/>
    <property type="match status" value="1"/>
</dbReference>
<dbReference type="Pfam" id="PF17757">
    <property type="entry name" value="UvrB_inter"/>
    <property type="match status" value="1"/>
</dbReference>
<dbReference type="SMART" id="SM00487">
    <property type="entry name" value="DEXDc"/>
    <property type="match status" value="1"/>
</dbReference>
<dbReference type="SMART" id="SM00490">
    <property type="entry name" value="HELICc"/>
    <property type="match status" value="1"/>
</dbReference>
<dbReference type="SUPFAM" id="SSF46600">
    <property type="entry name" value="C-terminal UvrC-binding domain of UvrB"/>
    <property type="match status" value="1"/>
</dbReference>
<dbReference type="SUPFAM" id="SSF52540">
    <property type="entry name" value="P-loop containing nucleoside triphosphate hydrolases"/>
    <property type="match status" value="2"/>
</dbReference>
<dbReference type="PROSITE" id="PS51192">
    <property type="entry name" value="HELICASE_ATP_BIND_1"/>
    <property type="match status" value="1"/>
</dbReference>
<dbReference type="PROSITE" id="PS51194">
    <property type="entry name" value="HELICASE_CTER"/>
    <property type="match status" value="1"/>
</dbReference>
<dbReference type="PROSITE" id="PS50151">
    <property type="entry name" value="UVR"/>
    <property type="match status" value="1"/>
</dbReference>
<accession>Q2NGT1</accession>
<protein>
    <recommendedName>
        <fullName evidence="1">UvrABC system protein B</fullName>
        <shortName evidence="1">Protein UvrB</shortName>
    </recommendedName>
    <alternativeName>
        <fullName evidence="1">Excinuclease ABC subunit B</fullName>
    </alternativeName>
</protein>
<reference key="1">
    <citation type="journal article" date="2006" name="J. Bacteriol.">
        <title>The genome sequence of Methanosphaera stadtmanae reveals why this human intestinal archaeon is restricted to methanol and H2 for methane formation and ATP synthesis.</title>
        <authorList>
            <person name="Fricke W.F."/>
            <person name="Seedorf H."/>
            <person name="Henne A."/>
            <person name="Kruer M."/>
            <person name="Liesegang H."/>
            <person name="Hedderich R."/>
            <person name="Gottschalk G."/>
            <person name="Thauer R.K."/>
        </authorList>
    </citation>
    <scope>NUCLEOTIDE SEQUENCE [LARGE SCALE GENOMIC DNA]</scope>
    <source>
        <strain>ATCC 43021 / DSM 3091 / JCM 11832 / MCB-3</strain>
    </source>
</reference>
<evidence type="ECO:0000255" key="1">
    <source>
        <dbReference type="HAMAP-Rule" id="MF_00204"/>
    </source>
</evidence>
<comment type="function">
    <text evidence="1">The UvrABC repair system catalyzes the recognition and processing of DNA lesions. A damage recognition complex composed of 2 UvrA and 2 UvrB subunits scans DNA for abnormalities. Upon binding of the UvrA(2)B(2) complex to a putative damaged site, the DNA wraps around one UvrB monomer. DNA wrap is dependent on ATP binding by UvrB and probably causes local melting of the DNA helix, facilitating insertion of UvrB beta-hairpin between the DNA strands. Then UvrB probes one DNA strand for the presence of a lesion. If a lesion is found the UvrA subunits dissociate and the UvrB-DNA preincision complex is formed. This complex is subsequently bound by UvrC and the second UvrB is released. If no lesion is found, the DNA wraps around the other UvrB subunit that will check the other stand for damage.</text>
</comment>
<comment type="subunit">
    <text evidence="1">Forms a heterotetramer with UvrA during the search for lesions. Interacts with UvrC in an incision complex.</text>
</comment>
<comment type="subcellular location">
    <subcellularLocation>
        <location evidence="1">Cytoplasm</location>
    </subcellularLocation>
</comment>
<comment type="domain">
    <text evidence="1">The beta-hairpin motif is involved in DNA binding.</text>
</comment>
<comment type="similarity">
    <text evidence="1">Belongs to the UvrB family.</text>
</comment>
<sequence>MSKFNLYSDYKPLGDQPKAIKSLVEHYKDGIKEQTLEGVTGSGKTFTMANVIEQLDKPTLVMSHNKTLAAQLYEEFKEFFPDNAVEYFVSYYDYYQPEAYVAQTDTFIDKESAINEEIDRLRHSATQSLLTRDDVIVVSSVSCIYGIGSPEDYAQFTLTLQTQQEISREDILKELVKMQYSRNDIEFIRGQFRVRGDVIEIFPINANYALRIELWGDEIDVIYKIDALKGDIIEELQKVIIFPAKHFVIAKEKQETAIANIKKELKERVDTFKATGKYVEAQRIEQRTNFDMEMLQEIGYCSGIENYSMHMNGRKWGETPYSLLRYFPDDYLTIIDESHVTVPQIRGMYEGDRARKENLIQYGFRLPSAKENRPLRFDEFMRAQNQVLYVSATPAAFELGRSKNKVEQIIRPTGLVDPEPIVRPIKNQVDDLLGEIRKCVDNNQRVLVTSLTKKMAEDLTDYYIKMNVKARYLHSEISTLERTEIIDELRRGDFDCLVGVNLLREGLDLPEVALVAILDADKEGFLRSQTSLIQTIGRAARNVNGRVILYADNITDSVRNAVNITKHRRKIQIAYNNDHNITPRSVVRKLKDKKIEEKVDDIQEIDNITTDEIDEIIKELEKEMKQAAKDLNFEKAAKLRDRIMELKEE</sequence>
<proteinExistence type="inferred from homology"/>
<gene>
    <name evidence="1" type="primary">uvrB</name>
    <name type="ordered locus">Msp_0573</name>
</gene>